<name>VDTG1_BYSSP</name>
<sequence>MNGNGTADKPGPPGGKPFGPGMGPPIQYPTGFKLYSIMTGLYLASFLTALDRTVLVVAIPQITDHFNSIDDIGWYGSAYLLTFCAFQLLFGKIYSFYNPKWVFLSAVLIFEIGSAICGAAPNSTALIIGRAIAGLGSSGIFGGSVIITFFTVPLHQRPIYTGIAGVIFALASSVGPLIGGGFTNNVSWRWCFYINLPVGALTVVTILLFLNLPPARKAGTPLREQLLQMDPLGNLCLIPGIICLLLAIQWGGSTYAWSNGRIVALLVLAGVLLIAFVGVQLWLQDKGTIPPRVMKQRSIAAGMAFTICVTAGFMSFNYYLPIWFQAIKNASSFHSGVMMLPTVISSGVASLACGFIIHRVGYYTPFMIGGSVLMAIGAGLLTTFTPTTEHPKWIGYQVLWALGCGMSMQQASLAAQTVLPKPDAPIGISLIFFSQSLGGSVFLAVDDSIYSNRLAAKLGSIPNLPQSALTNTGATNIRNLVAPQYLGRLLGGYNDALMDVFRVAVASSCACVVAAAFMEWKNVRAAKAAGPGGPGGPGGPGGPGGPEGLRGGNKV</sequence>
<organism>
    <name type="scientific">Byssochlamys spectabilis</name>
    <name type="common">Paecilomyces variotii</name>
    <dbReference type="NCBI Taxonomy" id="264951"/>
    <lineage>
        <taxon>Eukaryota</taxon>
        <taxon>Fungi</taxon>
        <taxon>Dikarya</taxon>
        <taxon>Ascomycota</taxon>
        <taxon>Pezizomycotina</taxon>
        <taxon>Eurotiomycetes</taxon>
        <taxon>Eurotiomycetidae</taxon>
        <taxon>Eurotiales</taxon>
        <taxon>Thermoascaceae</taxon>
        <taxon>Paecilomyces</taxon>
    </lineage>
</organism>
<dbReference type="EMBL" id="RCNU01000014">
    <property type="protein sequence ID" value="RWQ92172.1"/>
    <property type="molecule type" value="Genomic_DNA"/>
</dbReference>
<dbReference type="SMR" id="A0A443HJZ5"/>
<dbReference type="STRING" id="264951.A0A443HJZ5"/>
<dbReference type="GlyCosmos" id="A0A443HJZ5">
    <property type="glycosylation" value="4 sites, No reported glycans"/>
</dbReference>
<dbReference type="VEuPathDB" id="FungiDB:C8Q69DRAFT_488624"/>
<dbReference type="Proteomes" id="UP000283841">
    <property type="component" value="Unassembled WGS sequence"/>
</dbReference>
<dbReference type="GO" id="GO:0005789">
    <property type="term" value="C:endoplasmic reticulum membrane"/>
    <property type="evidence" value="ECO:0007669"/>
    <property type="project" value="UniProtKB-SubCell"/>
</dbReference>
<dbReference type="GO" id="GO:0005886">
    <property type="term" value="C:plasma membrane"/>
    <property type="evidence" value="ECO:0007669"/>
    <property type="project" value="TreeGrafter"/>
</dbReference>
<dbReference type="GO" id="GO:0022857">
    <property type="term" value="F:transmembrane transporter activity"/>
    <property type="evidence" value="ECO:0007669"/>
    <property type="project" value="InterPro"/>
</dbReference>
<dbReference type="CDD" id="cd17502">
    <property type="entry name" value="MFS_Azr1_MDR_like"/>
    <property type="match status" value="1"/>
</dbReference>
<dbReference type="FunFam" id="1.20.1250.20:FF:000196">
    <property type="entry name" value="MFS toxin efflux pump (AflT)"/>
    <property type="match status" value="1"/>
</dbReference>
<dbReference type="FunFam" id="1.20.1720.10:FF:000012">
    <property type="entry name" value="MFS toxin efflux pump (AflT)"/>
    <property type="match status" value="1"/>
</dbReference>
<dbReference type="Gene3D" id="1.20.1250.20">
    <property type="entry name" value="MFS general substrate transporter like domains"/>
    <property type="match status" value="1"/>
</dbReference>
<dbReference type="Gene3D" id="1.20.1720.10">
    <property type="entry name" value="Multidrug resistance protein D"/>
    <property type="match status" value="1"/>
</dbReference>
<dbReference type="InterPro" id="IPR011701">
    <property type="entry name" value="MFS"/>
</dbReference>
<dbReference type="InterPro" id="IPR020846">
    <property type="entry name" value="MFS_dom"/>
</dbReference>
<dbReference type="InterPro" id="IPR036259">
    <property type="entry name" value="MFS_trans_sf"/>
</dbReference>
<dbReference type="PANTHER" id="PTHR23501">
    <property type="entry name" value="MAJOR FACILITATOR SUPERFAMILY"/>
    <property type="match status" value="1"/>
</dbReference>
<dbReference type="PANTHER" id="PTHR23501:SF201">
    <property type="entry name" value="MFS AFLATOXIN EFFLUX PUMP"/>
    <property type="match status" value="1"/>
</dbReference>
<dbReference type="Pfam" id="PF07690">
    <property type="entry name" value="MFS_1"/>
    <property type="match status" value="1"/>
</dbReference>
<dbReference type="SUPFAM" id="SSF103473">
    <property type="entry name" value="MFS general substrate transporter"/>
    <property type="match status" value="1"/>
</dbReference>
<dbReference type="PROSITE" id="PS50850">
    <property type="entry name" value="MFS"/>
    <property type="match status" value="1"/>
</dbReference>
<keyword id="KW-0256">Endoplasmic reticulum</keyword>
<keyword id="KW-0325">Glycoprotein</keyword>
<keyword id="KW-0472">Membrane</keyword>
<keyword id="KW-1185">Reference proteome</keyword>
<keyword id="KW-0812">Transmembrane</keyword>
<keyword id="KW-1133">Transmembrane helix</keyword>
<evidence type="ECO:0000255" key="1"/>
<evidence type="ECO:0000255" key="2">
    <source>
        <dbReference type="PROSITE-ProRule" id="PRU00498"/>
    </source>
</evidence>
<evidence type="ECO:0000256" key="3">
    <source>
        <dbReference type="SAM" id="MobiDB-lite"/>
    </source>
</evidence>
<evidence type="ECO:0000269" key="4">
    <source>
    </source>
</evidence>
<evidence type="ECO:0000303" key="5">
    <source>
    </source>
</evidence>
<evidence type="ECO:0000305" key="6"/>
<accession>A0A443HJZ5</accession>
<feature type="chain" id="PRO_0000448347" description="MFS-type transporter VdtG">
    <location>
        <begin position="1"/>
        <end position="555"/>
    </location>
</feature>
<feature type="transmembrane region" description="Helical" evidence="1">
    <location>
        <begin position="30"/>
        <end position="50"/>
    </location>
</feature>
<feature type="transmembrane region" description="Helical" evidence="1">
    <location>
        <begin position="71"/>
        <end position="91"/>
    </location>
</feature>
<feature type="transmembrane region" description="Helical" evidence="1">
    <location>
        <begin position="101"/>
        <end position="121"/>
    </location>
</feature>
<feature type="transmembrane region" description="Helical" evidence="1">
    <location>
        <begin position="132"/>
        <end position="152"/>
    </location>
</feature>
<feature type="transmembrane region" description="Helical" evidence="1">
    <location>
        <begin position="162"/>
        <end position="182"/>
    </location>
</feature>
<feature type="transmembrane region" description="Helical" evidence="1">
    <location>
        <begin position="190"/>
        <end position="210"/>
    </location>
</feature>
<feature type="transmembrane region" description="Helical" evidence="1">
    <location>
        <begin position="232"/>
        <end position="252"/>
    </location>
</feature>
<feature type="transmembrane region" description="Helical" evidence="1">
    <location>
        <begin position="262"/>
        <end position="282"/>
    </location>
</feature>
<feature type="transmembrane region" description="Helical" evidence="1">
    <location>
        <begin position="304"/>
        <end position="324"/>
    </location>
</feature>
<feature type="transmembrane region" description="Helical" evidence="1">
    <location>
        <begin position="337"/>
        <end position="357"/>
    </location>
</feature>
<feature type="transmembrane region" description="Helical" evidence="1">
    <location>
        <begin position="364"/>
        <end position="384"/>
    </location>
</feature>
<feature type="transmembrane region" description="Helical" evidence="1">
    <location>
        <begin position="393"/>
        <end position="413"/>
    </location>
</feature>
<feature type="transmembrane region" description="Helical" evidence="1">
    <location>
        <begin position="425"/>
        <end position="445"/>
    </location>
</feature>
<feature type="transmembrane region" description="Helical" evidence="1">
    <location>
        <begin position="497"/>
        <end position="517"/>
    </location>
</feature>
<feature type="region of interest" description="Disordered" evidence="3">
    <location>
        <begin position="1"/>
        <end position="20"/>
    </location>
</feature>
<feature type="region of interest" description="Disordered" evidence="3">
    <location>
        <begin position="528"/>
        <end position="555"/>
    </location>
</feature>
<feature type="compositionally biased region" description="Gly residues" evidence="3">
    <location>
        <begin position="530"/>
        <end position="555"/>
    </location>
</feature>
<feature type="glycosylation site" description="N-linked (GlcNAc...) asparagine" evidence="2">
    <location>
        <position position="4"/>
    </location>
</feature>
<feature type="glycosylation site" description="N-linked (GlcNAc...) asparagine" evidence="2">
    <location>
        <position position="122"/>
    </location>
</feature>
<feature type="glycosylation site" description="N-linked (GlcNAc...) asparagine" evidence="2">
    <location>
        <position position="185"/>
    </location>
</feature>
<feature type="glycosylation site" description="N-linked (GlcNAc...) asparagine" evidence="2">
    <location>
        <position position="329"/>
    </location>
</feature>
<comment type="function">
    <text evidence="4">MFS-type transporter; part of the gene cluster that mediates the biosynthesis of viriditoxin, one of the 'classical' secondary metabolites produced by fungi and that has antibacterial activity (PubMed:31304040). Is not essential for viriditoxin production (PubMed:31304040).</text>
</comment>
<comment type="subcellular location">
    <subcellularLocation>
        <location evidence="4">Endoplasmic reticulum membrane</location>
        <topology evidence="1">Multi-pass membrane protein</topology>
    </subcellularLocation>
</comment>
<comment type="disruption phenotype">
    <text evidence="4">Does not affect the production of viriditoxin but leads to a sporulation defect.</text>
</comment>
<comment type="similarity">
    <text evidence="6">Belongs to the major facilitator superfamily. TCR/Tet family.</text>
</comment>
<reference key="1">
    <citation type="journal article" date="2018" name="Front. Microbiol.">
        <title>Genomic and genetic insights into a cosmopolitan fungus, Paecilomyces variotii (Eurotiales).</title>
        <authorList>
            <person name="Urquhart A.S."/>
            <person name="Mondo S.J."/>
            <person name="Maekelae M.R."/>
            <person name="Hane J.K."/>
            <person name="Wiebenga A."/>
            <person name="He G."/>
            <person name="Mihaltcheva S."/>
            <person name="Pangilinan J."/>
            <person name="Lipzen A."/>
            <person name="Barry K."/>
            <person name="de Vries R.P."/>
            <person name="Grigoriev I.V."/>
            <person name="Idnurm A."/>
        </authorList>
    </citation>
    <scope>NUCLEOTIDE SEQUENCE [LARGE SCALE GENOMIC DNA]</scope>
    <source>
        <strain>ATCC 90900 / JCM 12815 / CBS 101075</strain>
    </source>
</reference>
<reference key="2">
    <citation type="journal article" date="2019" name="Fungal Biol. Biotechnol.">
        <title>The fungal gene cluster for biosynthesis of the antibacterial agent viriditoxin.</title>
        <authorList>
            <person name="Urquhart A.S."/>
            <person name="Hu J."/>
            <person name="Chooi Y.H."/>
            <person name="Idnurm A."/>
        </authorList>
    </citation>
    <scope>IDENTIFICATION</scope>
    <scope>FUNCTION</scope>
    <scope>DISRUPTION PHENOTYPE</scope>
    <scope>SUBCELLULAR LOCATION</scope>
</reference>
<protein>
    <recommendedName>
        <fullName evidence="5">MFS-type transporter VdtG</fullName>
    </recommendedName>
    <alternativeName>
        <fullName evidence="5">Viriditoxin biosynthesis cluster protein G</fullName>
    </alternativeName>
</protein>
<proteinExistence type="inferred from homology"/>
<gene>
    <name evidence="5" type="primary">VdtG</name>
    <name type="ORF">C8Q69DRAFT_488624</name>
</gene>